<feature type="chain" id="PRO_0000055914" description="E3 ubiquitin-protein ligase LNX">
    <location>
        <begin position="1"/>
        <end position="728"/>
    </location>
</feature>
<feature type="domain" description="PDZ 1" evidence="3">
    <location>
        <begin position="278"/>
        <end position="362"/>
    </location>
</feature>
<feature type="domain" description="PDZ 2" evidence="3">
    <location>
        <begin position="385"/>
        <end position="467"/>
    </location>
</feature>
<feature type="domain" description="PDZ 3" evidence="3">
    <location>
        <begin position="508"/>
        <end position="593"/>
    </location>
</feature>
<feature type="domain" description="PDZ 4" evidence="3">
    <location>
        <begin position="638"/>
        <end position="723"/>
    </location>
</feature>
<feature type="zinc finger region" description="RING-type" evidence="4">
    <location>
        <begin position="45"/>
        <end position="83"/>
    </location>
</feature>
<feature type="region of interest" description="Disordered" evidence="5">
    <location>
        <begin position="185"/>
        <end position="220"/>
    </location>
</feature>
<feature type="region of interest" description="Interaction with MAGEB18" evidence="1">
    <location>
        <begin position="186"/>
        <end position="244"/>
    </location>
</feature>
<feature type="region of interest" description="Disordered" evidence="5">
    <location>
        <begin position="481"/>
        <end position="500"/>
    </location>
</feature>
<feature type="short sequence motif" description="NPXY motif">
    <location>
        <begin position="185"/>
        <end position="188"/>
    </location>
</feature>
<feature type="modified residue" description="Phosphoserine" evidence="2">
    <location>
        <position position="445"/>
    </location>
</feature>
<feature type="splice variant" id="VSP_005734" description="In isoform 2 and isoform 3." evidence="10 11 12">
    <original>MNQPDLADDPDPSPEPLCIVCGQNHSPEENHFYTYTEDVDDDLICHICLQALLDPLDTPCGHTYCTLCLTNFLVEKDFCPVDRKPVVLQHCKKSSILVNKLLNKLLVTCPFTEHCTEVLQRCDLQHHFQTS</original>
    <variation>MKALLLLVLPWLSPANYIDNVGNLHFLYSEL</variation>
    <location>
        <begin position="1"/>
        <end position="131"/>
    </location>
</feature>
<feature type="splice variant" id="VSP_012588" description="In isoform 3." evidence="10">
    <original>NGMDISNVPHNYAVRLLRQPCQVLRL</original>
    <variation>PMRRELVTIGYKIVSCRLCVAHNLSP</variation>
    <location>
        <begin position="332"/>
        <end position="357"/>
    </location>
</feature>
<feature type="splice variant" id="VSP_012589" description="In isoform 3." evidence="10">
    <location>
        <begin position="358"/>
        <end position="728"/>
    </location>
</feature>
<feature type="mutagenesis site" description="Loss of function." evidence="6">
    <original>C</original>
    <variation>A</variation>
    <location>
        <position position="48"/>
    </location>
</feature>
<feature type="mutagenesis site" description="No effect on binding to NUMB protein." evidence="9">
    <original>P</original>
    <variation>A</variation>
    <location>
        <position position="181"/>
    </location>
</feature>
<feature type="mutagenesis site" description="Slightly affects binding to NUMB protein." evidence="9">
    <original>G</original>
    <variation>A</variation>
    <location>
        <position position="182"/>
    </location>
</feature>
<feature type="mutagenesis site" description="Abolishes binding to NUMB protein." evidence="9">
    <original>L</original>
    <variation>A</variation>
    <location>
        <position position="183"/>
    </location>
</feature>
<feature type="mutagenesis site" description="Slightly affects binding to NUMB protein." evidence="9">
    <original>D</original>
    <variation>A</variation>
    <location>
        <position position="184"/>
    </location>
</feature>
<feature type="mutagenesis site" description="Abolishes binding to NUMB protein." evidence="9">
    <original>N</original>
    <variation>A</variation>
    <location>
        <position position="185"/>
    </location>
</feature>
<feature type="mutagenesis site" description="Slightly affects binding to NUMB protein." evidence="9">
    <original>P</original>
    <variation>A</variation>
    <location>
        <position position="186"/>
    </location>
</feature>
<feature type="mutagenesis site" description="Abolishes binding to NUMB protein." evidence="9">
    <original>Y</original>
    <variation>A</variation>
    <location>
        <position position="188"/>
    </location>
</feature>
<feature type="mutagenesis site" description="No effect on binding to NUMB protein." evidence="9">
    <original>Y</original>
    <variation>F</variation>
    <location>
        <position position="188"/>
    </location>
</feature>
<feature type="sequence conflict" description="In Ref. 2; BAC31789." evidence="13" ref="2">
    <original>T</original>
    <variation>N</variation>
    <location>
        <position position="258"/>
    </location>
</feature>
<feature type="strand" evidence="14">
    <location>
        <begin position="384"/>
        <end position="389"/>
    </location>
</feature>
<feature type="strand" evidence="14">
    <location>
        <begin position="398"/>
        <end position="402"/>
    </location>
</feature>
<feature type="strand" evidence="14">
    <location>
        <begin position="405"/>
        <end position="407"/>
    </location>
</feature>
<feature type="strand" evidence="14">
    <location>
        <begin position="409"/>
        <end position="415"/>
    </location>
</feature>
<feature type="helix" evidence="14">
    <location>
        <begin position="420"/>
        <end position="424"/>
    </location>
</feature>
<feature type="strand" evidence="14">
    <location>
        <begin position="432"/>
        <end position="436"/>
    </location>
</feature>
<feature type="helix" evidence="14">
    <location>
        <begin position="446"/>
        <end position="455"/>
    </location>
</feature>
<feature type="strand" evidence="14">
    <location>
        <begin position="456"/>
        <end position="465"/>
    </location>
</feature>
<evidence type="ECO:0000250" key="1"/>
<evidence type="ECO:0000250" key="2">
    <source>
        <dbReference type="UniProtKB" id="Q8TBB1"/>
    </source>
</evidence>
<evidence type="ECO:0000255" key="3">
    <source>
        <dbReference type="PROSITE-ProRule" id="PRU00143"/>
    </source>
</evidence>
<evidence type="ECO:0000255" key="4">
    <source>
        <dbReference type="PROSITE-ProRule" id="PRU00175"/>
    </source>
</evidence>
<evidence type="ECO:0000256" key="5">
    <source>
        <dbReference type="SAM" id="MobiDB-lite"/>
    </source>
</evidence>
<evidence type="ECO:0000269" key="6">
    <source>
    </source>
</evidence>
<evidence type="ECO:0000269" key="7">
    <source>
    </source>
</evidence>
<evidence type="ECO:0000269" key="8">
    <source>
    </source>
</evidence>
<evidence type="ECO:0000269" key="9">
    <source>
    </source>
</evidence>
<evidence type="ECO:0000303" key="10">
    <source>
    </source>
</evidence>
<evidence type="ECO:0000303" key="11">
    <source>
    </source>
</evidence>
<evidence type="ECO:0000303" key="12">
    <source>
    </source>
</evidence>
<evidence type="ECO:0000305" key="13"/>
<evidence type="ECO:0007829" key="14">
    <source>
        <dbReference type="PDB" id="3VQF"/>
    </source>
</evidence>
<proteinExistence type="evidence at protein level"/>
<keyword id="KW-0002">3D-structure</keyword>
<keyword id="KW-0025">Alternative splicing</keyword>
<keyword id="KW-0963">Cytoplasm</keyword>
<keyword id="KW-0479">Metal-binding</keyword>
<keyword id="KW-0597">Phosphoprotein</keyword>
<keyword id="KW-1185">Reference proteome</keyword>
<keyword id="KW-0677">Repeat</keyword>
<keyword id="KW-0808">Transferase</keyword>
<keyword id="KW-0833">Ubl conjugation pathway</keyword>
<keyword id="KW-0862">Zinc</keyword>
<keyword id="KW-0863">Zinc-finger</keyword>
<comment type="function">
    <text evidence="6 7 9">E3 ubiquitin-protein ligase that mediates ubiquitination and subsequent proteasomal degradation of NUMB. E3 ubiquitin ligases accept ubiquitin from an E2 ubiquitin-conjugating enzyme in the form of a thioester and then directly transfers the ubiquitin to targeted substrates. Mediates ubiquitination of isoform p66 and isoform p72 of NUMB, but not that of isoform p71 or isoform p65.</text>
</comment>
<comment type="function">
    <text evidence="9">Isoform 2 provides an endocytic scaffold for IGSF5/JAM4.</text>
</comment>
<comment type="catalytic activity">
    <reaction>
        <text>S-ubiquitinyl-[E2 ubiquitin-conjugating enzyme]-L-cysteine + [acceptor protein]-L-lysine = [E2 ubiquitin-conjugating enzyme]-L-cysteine + N(6)-ubiquitinyl-[acceptor protein]-L-lysine.</text>
        <dbReference type="EC" id="2.3.2.27"/>
    </reaction>
</comment>
<comment type="pathway">
    <text>Protein modification; protein ubiquitination.</text>
</comment>
<comment type="subunit">
    <text evidence="1 7 8">Interacts with CXADR. Interacts with MAGEB18 and MAGEF1 (By similarity). Interacts with the phosphotyrosine interaction domain of all isoforms of NUMB. IGSF5/JAM4 interacts with isoform 2 through the second PDZ domain, other isoforms may also interact with IGSF5/JAM4.</text>
</comment>
<comment type="subcellular location">
    <subcellularLocation>
        <location>Cytoplasm</location>
    </subcellularLocation>
</comment>
<comment type="alternative products">
    <event type="alternative splicing"/>
    <isoform>
        <id>O70263-1</id>
        <name>1</name>
        <name>LNX</name>
        <name>LNXp80</name>
        <sequence type="displayed"/>
    </isoform>
    <isoform>
        <id>O70263-2</id>
        <name>2</name>
        <name>LNX-B</name>
        <name>LNXp70</name>
        <sequence type="described" ref="VSP_005734"/>
    </isoform>
    <isoform>
        <id>O70263-3</id>
        <name>3</name>
        <sequence type="described" ref="VSP_005734 VSP_012588 VSP_012589"/>
    </isoform>
</comment>
<comment type="tissue specificity">
    <text evidence="9">Isoform 1 and isoform 2 are expressed in the heart. Isoform 1 is also expressed in kidney, lung and skeletal muscle while isoform 2 is also expressed in brain.</text>
</comment>
<comment type="domain">
    <text>The NPXY motif is required for the interaction with the PID domain of NUMB. It is however not sufficient.</text>
</comment>
<comment type="domain">
    <text>The PDZ 1 domain participates in the interaction with the PID domain of NUMB, and participates in the isoform-specific ubiquitination of NUMB. The PDZ 2 domain of isoform 2 participates in the interaction with IGSF5/JAM4, other isoforms containing this domain may also interact with IGSF5/JAM4.</text>
</comment>
<protein>
    <recommendedName>
        <fullName>E3 ubiquitin-protein ligase LNX</fullName>
        <ecNumber>2.3.2.27</ecNumber>
    </recommendedName>
    <alternativeName>
        <fullName>Ligand of Numb protein X 1</fullName>
    </alternativeName>
    <alternativeName>
        <fullName>Ligand of Numb-binding protein 1</fullName>
    </alternativeName>
    <alternativeName>
        <fullName>Numb-binding protein 1</fullName>
    </alternativeName>
    <alternativeName>
        <fullName evidence="13">RING-type E3 ubiquitin transferase LNX</fullName>
    </alternativeName>
</protein>
<accession>O70263</accession>
<accession>O70264</accession>
<accession>Q8BRI8</accession>
<accession>Q8CFR3</accession>
<organism>
    <name type="scientific">Mus musculus</name>
    <name type="common">Mouse</name>
    <dbReference type="NCBI Taxonomy" id="10090"/>
    <lineage>
        <taxon>Eukaryota</taxon>
        <taxon>Metazoa</taxon>
        <taxon>Chordata</taxon>
        <taxon>Craniata</taxon>
        <taxon>Vertebrata</taxon>
        <taxon>Euteleostomi</taxon>
        <taxon>Mammalia</taxon>
        <taxon>Eutheria</taxon>
        <taxon>Euarchontoglires</taxon>
        <taxon>Glires</taxon>
        <taxon>Rodentia</taxon>
        <taxon>Myomorpha</taxon>
        <taxon>Muroidea</taxon>
        <taxon>Muridae</taxon>
        <taxon>Murinae</taxon>
        <taxon>Mus</taxon>
        <taxon>Mus</taxon>
    </lineage>
</organism>
<dbReference type="EC" id="2.3.2.27"/>
<dbReference type="EMBL" id="AF034745">
    <property type="protein sequence ID" value="AAC40075.1"/>
    <property type="molecule type" value="mRNA"/>
</dbReference>
<dbReference type="EMBL" id="AF034746">
    <property type="protein sequence ID" value="AAC40076.1"/>
    <property type="molecule type" value="mRNA"/>
</dbReference>
<dbReference type="EMBL" id="AK044127">
    <property type="protein sequence ID" value="BAC31789.1"/>
    <property type="molecule type" value="mRNA"/>
</dbReference>
<dbReference type="EMBL" id="BC040367">
    <property type="protein sequence ID" value="AAH40367.1"/>
    <property type="molecule type" value="mRNA"/>
</dbReference>
<dbReference type="CCDS" id="CCDS19347.1">
    <molecule id="O70263-2"/>
</dbReference>
<dbReference type="CCDS" id="CCDS51524.1">
    <molecule id="O70263-1"/>
</dbReference>
<dbReference type="PIR" id="T09457">
    <property type="entry name" value="T09457"/>
</dbReference>
<dbReference type="PIR" id="T09458">
    <property type="entry name" value="T09458"/>
</dbReference>
<dbReference type="RefSeq" id="NP_001153049.1">
    <molecule id="O70263-1"/>
    <property type="nucleotide sequence ID" value="NM_001159577.1"/>
</dbReference>
<dbReference type="RefSeq" id="NP_001153050.1">
    <property type="nucleotide sequence ID" value="NM_001159578.1"/>
</dbReference>
<dbReference type="RefSeq" id="NP_001153051.1">
    <molecule id="O70263-2"/>
    <property type="nucleotide sequence ID" value="NM_001159579.1"/>
</dbReference>
<dbReference type="RefSeq" id="NP_001153052.1">
    <property type="nucleotide sequence ID" value="NM_001159580.1"/>
</dbReference>
<dbReference type="RefSeq" id="NP_034857.3">
    <molecule id="O70263-2"/>
    <property type="nucleotide sequence ID" value="NM_010727.4"/>
</dbReference>
<dbReference type="RefSeq" id="XP_006504317.1">
    <molecule id="O70263-1"/>
    <property type="nucleotide sequence ID" value="XM_006504254.4"/>
</dbReference>
<dbReference type="RefSeq" id="XP_036020727.1">
    <molecule id="O70263-1"/>
    <property type="nucleotide sequence ID" value="XM_036164834.1"/>
</dbReference>
<dbReference type="PDB" id="3VQF">
    <property type="method" value="X-ray"/>
    <property type="resolution" value="1.20 A"/>
    <property type="chains" value="A=381-467"/>
</dbReference>
<dbReference type="PDB" id="3VQG">
    <property type="method" value="X-ray"/>
    <property type="resolution" value="1.35 A"/>
    <property type="chains" value="A=381-467"/>
</dbReference>
<dbReference type="PDBsum" id="3VQF"/>
<dbReference type="PDBsum" id="3VQG"/>
<dbReference type="SMR" id="O70263"/>
<dbReference type="BioGRID" id="201187">
    <property type="interactions" value="87"/>
</dbReference>
<dbReference type="CORUM" id="O70263"/>
<dbReference type="FunCoup" id="O70263">
    <property type="interactions" value="811"/>
</dbReference>
<dbReference type="IntAct" id="O70263">
    <property type="interactions" value="3"/>
</dbReference>
<dbReference type="MINT" id="O70263"/>
<dbReference type="STRING" id="10090.ENSMUSP00000084405"/>
<dbReference type="GlyGen" id="O70263">
    <property type="glycosylation" value="2 sites, 1 O-linked glycan (2 sites)"/>
</dbReference>
<dbReference type="iPTMnet" id="O70263"/>
<dbReference type="PhosphoSitePlus" id="O70263"/>
<dbReference type="PaxDb" id="10090-ENSMUSP00000113035"/>
<dbReference type="ProteomicsDB" id="290136">
    <molecule id="O70263-1"/>
</dbReference>
<dbReference type="ProteomicsDB" id="290137">
    <molecule id="O70263-2"/>
</dbReference>
<dbReference type="ProteomicsDB" id="290138">
    <molecule id="O70263-3"/>
</dbReference>
<dbReference type="Antibodypedia" id="1114">
    <property type="antibodies" value="226 antibodies from 29 providers"/>
</dbReference>
<dbReference type="DNASU" id="16924"/>
<dbReference type="Ensembl" id="ENSMUST00000039744.13">
    <molecule id="O70263-2"/>
    <property type="protein sequence ID" value="ENSMUSP00000040098.7"/>
    <property type="gene ID" value="ENSMUSG00000029228.16"/>
</dbReference>
<dbReference type="Ensembl" id="ENSMUST00000087161.10">
    <molecule id="O70263-1"/>
    <property type="protein sequence ID" value="ENSMUSP00000084405.4"/>
    <property type="gene ID" value="ENSMUSG00000029228.16"/>
</dbReference>
<dbReference type="Ensembl" id="ENSMUST00000117388.8">
    <molecule id="O70263-1"/>
    <property type="protein sequence ID" value="ENSMUSP00000113035.2"/>
    <property type="gene ID" value="ENSMUSG00000029228.16"/>
</dbReference>
<dbReference type="Ensembl" id="ENSMUST00000117525.8">
    <molecule id="O70263-2"/>
    <property type="protein sequence ID" value="ENSMUSP00000113837.2"/>
    <property type="gene ID" value="ENSMUSG00000029228.16"/>
</dbReference>
<dbReference type="GeneID" id="16924"/>
<dbReference type="KEGG" id="mmu:16924"/>
<dbReference type="UCSC" id="uc008xtr.2">
    <molecule id="O70263-1"/>
    <property type="organism name" value="mouse"/>
</dbReference>
<dbReference type="UCSC" id="uc008xtu.2">
    <molecule id="O70263-3"/>
    <property type="organism name" value="mouse"/>
</dbReference>
<dbReference type="AGR" id="MGI:1278335"/>
<dbReference type="CTD" id="84708"/>
<dbReference type="MGI" id="MGI:1278335">
    <property type="gene designation" value="Lnx1"/>
</dbReference>
<dbReference type="VEuPathDB" id="HostDB:ENSMUSG00000029228"/>
<dbReference type="eggNOG" id="KOG0297">
    <property type="taxonomic scope" value="Eukaryota"/>
</dbReference>
<dbReference type="eggNOG" id="KOG3528">
    <property type="taxonomic scope" value="Eukaryota"/>
</dbReference>
<dbReference type="GeneTree" id="ENSGT00940000158757"/>
<dbReference type="HOGENOM" id="CLU_021213_0_0_1"/>
<dbReference type="InParanoid" id="O70263"/>
<dbReference type="OMA" id="NHNMAPA"/>
<dbReference type="OrthoDB" id="438726at2759"/>
<dbReference type="PhylomeDB" id="O70263"/>
<dbReference type="TreeFam" id="TF330709"/>
<dbReference type="Reactome" id="R-MMU-983168">
    <property type="pathway name" value="Antigen processing: Ubiquitination &amp; Proteasome degradation"/>
</dbReference>
<dbReference type="UniPathway" id="UPA00143"/>
<dbReference type="BioGRID-ORCS" id="16924">
    <property type="hits" value="2 hits in 78 CRISPR screens"/>
</dbReference>
<dbReference type="ChiTaRS" id="Lnx1">
    <property type="organism name" value="mouse"/>
</dbReference>
<dbReference type="EvolutionaryTrace" id="O70263"/>
<dbReference type="PRO" id="PR:O70263"/>
<dbReference type="Proteomes" id="UP000000589">
    <property type="component" value="Chromosome 5"/>
</dbReference>
<dbReference type="RNAct" id="O70263">
    <property type="molecule type" value="protein"/>
</dbReference>
<dbReference type="Bgee" id="ENSMUSG00000029228">
    <property type="expression patterns" value="Expressed in motor neuron and 227 other cell types or tissues"/>
</dbReference>
<dbReference type="ExpressionAtlas" id="O70263">
    <property type="expression patterns" value="baseline and differential"/>
</dbReference>
<dbReference type="GO" id="GO:0005737">
    <property type="term" value="C:cytoplasm"/>
    <property type="evidence" value="ECO:0000314"/>
    <property type="project" value="MGI"/>
</dbReference>
<dbReference type="GO" id="GO:0098686">
    <property type="term" value="C:hippocampal mossy fiber to CA3 synapse"/>
    <property type="evidence" value="ECO:0000314"/>
    <property type="project" value="SynGO"/>
</dbReference>
<dbReference type="GO" id="GO:0098794">
    <property type="term" value="C:postsynapse"/>
    <property type="evidence" value="ECO:0000314"/>
    <property type="project" value="SynGO"/>
</dbReference>
<dbReference type="GO" id="GO:0042802">
    <property type="term" value="F:identical protein binding"/>
    <property type="evidence" value="ECO:0000353"/>
    <property type="project" value="MGI"/>
</dbReference>
<dbReference type="GO" id="GO:0030165">
    <property type="term" value="F:PDZ domain binding"/>
    <property type="evidence" value="ECO:0000314"/>
    <property type="project" value="MGI"/>
</dbReference>
<dbReference type="GO" id="GO:0004842">
    <property type="term" value="F:ubiquitin-protein transferase activity"/>
    <property type="evidence" value="ECO:0000314"/>
    <property type="project" value="MGI"/>
</dbReference>
<dbReference type="GO" id="GO:0008270">
    <property type="term" value="F:zinc ion binding"/>
    <property type="evidence" value="ECO:0007669"/>
    <property type="project" value="UniProtKB-KW"/>
</dbReference>
<dbReference type="GO" id="GO:0016567">
    <property type="term" value="P:protein ubiquitination"/>
    <property type="evidence" value="ECO:0007669"/>
    <property type="project" value="UniProtKB-UniPathway"/>
</dbReference>
<dbReference type="GO" id="GO:0060074">
    <property type="term" value="P:synapse maturation"/>
    <property type="evidence" value="ECO:0000314"/>
    <property type="project" value="SynGO"/>
</dbReference>
<dbReference type="GO" id="GO:0006511">
    <property type="term" value="P:ubiquitin-dependent protein catabolic process"/>
    <property type="evidence" value="ECO:0000314"/>
    <property type="project" value="MGI"/>
</dbReference>
<dbReference type="CDD" id="cd16779">
    <property type="entry name" value="mRING-HC-C3HC3D_LNX1"/>
    <property type="match status" value="1"/>
</dbReference>
<dbReference type="CDD" id="cd06677">
    <property type="entry name" value="PDZ1_LNX1_2-like"/>
    <property type="match status" value="1"/>
</dbReference>
<dbReference type="CDD" id="cd06678">
    <property type="entry name" value="PDZ2_LNX1_2-like"/>
    <property type="match status" value="1"/>
</dbReference>
<dbReference type="CDD" id="cd06679">
    <property type="entry name" value="PDZ3_LNX1_2-like"/>
    <property type="match status" value="1"/>
</dbReference>
<dbReference type="CDD" id="cd06680">
    <property type="entry name" value="PDZ4_LNX1_2-like"/>
    <property type="match status" value="1"/>
</dbReference>
<dbReference type="FunFam" id="2.30.42.10:FF:000198">
    <property type="entry name" value="E3 ubiquitin-protein ligase LNX isoform X1"/>
    <property type="match status" value="1"/>
</dbReference>
<dbReference type="FunFam" id="2.30.42.10:FF:000081">
    <property type="entry name" value="Ligand of Numb protein X 2"/>
    <property type="match status" value="1"/>
</dbReference>
<dbReference type="FunFam" id="3.30.40.10:FF:000120">
    <property type="entry name" value="ligand of Numb protein X 2"/>
    <property type="match status" value="1"/>
</dbReference>
<dbReference type="FunFam" id="2.30.42.10:FF:000120">
    <property type="entry name" value="Ligand of numb-protein X 2"/>
    <property type="match status" value="1"/>
</dbReference>
<dbReference type="FunFam" id="2.30.42.10:FF:000164">
    <property type="entry name" value="Ligand of numb-protein X 2"/>
    <property type="match status" value="1"/>
</dbReference>
<dbReference type="Gene3D" id="2.30.42.10">
    <property type="match status" value="4"/>
</dbReference>
<dbReference type="Gene3D" id="3.30.40.10">
    <property type="entry name" value="Zinc/RING finger domain, C3HC4 (zinc finger)"/>
    <property type="match status" value="1"/>
</dbReference>
<dbReference type="InterPro" id="IPR001478">
    <property type="entry name" value="PDZ"/>
</dbReference>
<dbReference type="InterPro" id="IPR051342">
    <property type="entry name" value="PDZ_scaffold"/>
</dbReference>
<dbReference type="InterPro" id="IPR036034">
    <property type="entry name" value="PDZ_sf"/>
</dbReference>
<dbReference type="InterPro" id="IPR001841">
    <property type="entry name" value="Znf_RING"/>
</dbReference>
<dbReference type="InterPro" id="IPR013083">
    <property type="entry name" value="Znf_RING/FYVE/PHD"/>
</dbReference>
<dbReference type="InterPro" id="IPR017907">
    <property type="entry name" value="Znf_RING_CS"/>
</dbReference>
<dbReference type="PANTHER" id="PTHR19964:SF14">
    <property type="entry name" value="E3 UBIQUITIN-PROTEIN LIGASE LNX"/>
    <property type="match status" value="1"/>
</dbReference>
<dbReference type="PANTHER" id="PTHR19964">
    <property type="entry name" value="MULTIPLE PDZ DOMAIN PROTEIN"/>
    <property type="match status" value="1"/>
</dbReference>
<dbReference type="Pfam" id="PF00595">
    <property type="entry name" value="PDZ"/>
    <property type="match status" value="4"/>
</dbReference>
<dbReference type="Pfam" id="PF13920">
    <property type="entry name" value="zf-C3HC4_3"/>
    <property type="match status" value="1"/>
</dbReference>
<dbReference type="SMART" id="SM00228">
    <property type="entry name" value="PDZ"/>
    <property type="match status" value="4"/>
</dbReference>
<dbReference type="SMART" id="SM00184">
    <property type="entry name" value="RING"/>
    <property type="match status" value="1"/>
</dbReference>
<dbReference type="SUPFAM" id="SSF50156">
    <property type="entry name" value="PDZ domain-like"/>
    <property type="match status" value="4"/>
</dbReference>
<dbReference type="SUPFAM" id="SSF57850">
    <property type="entry name" value="RING/U-box"/>
    <property type="match status" value="1"/>
</dbReference>
<dbReference type="PROSITE" id="PS50106">
    <property type="entry name" value="PDZ"/>
    <property type="match status" value="4"/>
</dbReference>
<dbReference type="PROSITE" id="PS00518">
    <property type="entry name" value="ZF_RING_1"/>
    <property type="match status" value="1"/>
</dbReference>
<dbReference type="PROSITE" id="PS50089">
    <property type="entry name" value="ZF_RING_2"/>
    <property type="match status" value="1"/>
</dbReference>
<reference key="1">
    <citation type="journal article" date="1998" name="J. Biol. Chem.">
        <title>The mammalian numb phosphotyrosine-binding domain. Characterization of binding specificity and identification of a novel PDZ domain-containing numb binding protein, LNX.</title>
        <authorList>
            <person name="Dho S.E."/>
            <person name="Jacob S."/>
            <person name="Wolting C.D."/>
            <person name="French M.B."/>
            <person name="Rohrschneider L.R."/>
            <person name="McGlade C.J."/>
        </authorList>
    </citation>
    <scope>NUCLEOTIDE SEQUENCE [MRNA] (ISOFORMS 1 AND 2)</scope>
    <scope>FUNCTION</scope>
    <scope>TISSUE SPECIFICITY</scope>
    <scope>MUTAGENESIS OF PRO-181; GLY-182; LEU-183; ASP-184; ASN-185; PRO-186 AND TYR-188</scope>
    <source>
        <tissue>Brain</tissue>
        <tissue>Embryo</tissue>
    </source>
</reference>
<reference key="2">
    <citation type="journal article" date="2005" name="Science">
        <title>The transcriptional landscape of the mammalian genome.</title>
        <authorList>
            <person name="Carninci P."/>
            <person name="Kasukawa T."/>
            <person name="Katayama S."/>
            <person name="Gough J."/>
            <person name="Frith M.C."/>
            <person name="Maeda N."/>
            <person name="Oyama R."/>
            <person name="Ravasi T."/>
            <person name="Lenhard B."/>
            <person name="Wells C."/>
            <person name="Kodzius R."/>
            <person name="Shimokawa K."/>
            <person name="Bajic V.B."/>
            <person name="Brenner S.E."/>
            <person name="Batalov S."/>
            <person name="Forrest A.R."/>
            <person name="Zavolan M."/>
            <person name="Davis M.J."/>
            <person name="Wilming L.G."/>
            <person name="Aidinis V."/>
            <person name="Allen J.E."/>
            <person name="Ambesi-Impiombato A."/>
            <person name="Apweiler R."/>
            <person name="Aturaliya R.N."/>
            <person name="Bailey T.L."/>
            <person name="Bansal M."/>
            <person name="Baxter L."/>
            <person name="Beisel K.W."/>
            <person name="Bersano T."/>
            <person name="Bono H."/>
            <person name="Chalk A.M."/>
            <person name="Chiu K.P."/>
            <person name="Choudhary V."/>
            <person name="Christoffels A."/>
            <person name="Clutterbuck D.R."/>
            <person name="Crowe M.L."/>
            <person name="Dalla E."/>
            <person name="Dalrymple B.P."/>
            <person name="de Bono B."/>
            <person name="Della Gatta G."/>
            <person name="di Bernardo D."/>
            <person name="Down T."/>
            <person name="Engstrom P."/>
            <person name="Fagiolini M."/>
            <person name="Faulkner G."/>
            <person name="Fletcher C.F."/>
            <person name="Fukushima T."/>
            <person name="Furuno M."/>
            <person name="Futaki S."/>
            <person name="Gariboldi M."/>
            <person name="Georgii-Hemming P."/>
            <person name="Gingeras T.R."/>
            <person name="Gojobori T."/>
            <person name="Green R.E."/>
            <person name="Gustincich S."/>
            <person name="Harbers M."/>
            <person name="Hayashi Y."/>
            <person name="Hensch T.K."/>
            <person name="Hirokawa N."/>
            <person name="Hill D."/>
            <person name="Huminiecki L."/>
            <person name="Iacono M."/>
            <person name="Ikeo K."/>
            <person name="Iwama A."/>
            <person name="Ishikawa T."/>
            <person name="Jakt M."/>
            <person name="Kanapin A."/>
            <person name="Katoh M."/>
            <person name="Kawasawa Y."/>
            <person name="Kelso J."/>
            <person name="Kitamura H."/>
            <person name="Kitano H."/>
            <person name="Kollias G."/>
            <person name="Krishnan S.P."/>
            <person name="Kruger A."/>
            <person name="Kummerfeld S.K."/>
            <person name="Kurochkin I.V."/>
            <person name="Lareau L.F."/>
            <person name="Lazarevic D."/>
            <person name="Lipovich L."/>
            <person name="Liu J."/>
            <person name="Liuni S."/>
            <person name="McWilliam S."/>
            <person name="Madan Babu M."/>
            <person name="Madera M."/>
            <person name="Marchionni L."/>
            <person name="Matsuda H."/>
            <person name="Matsuzawa S."/>
            <person name="Miki H."/>
            <person name="Mignone F."/>
            <person name="Miyake S."/>
            <person name="Morris K."/>
            <person name="Mottagui-Tabar S."/>
            <person name="Mulder N."/>
            <person name="Nakano N."/>
            <person name="Nakauchi H."/>
            <person name="Ng P."/>
            <person name="Nilsson R."/>
            <person name="Nishiguchi S."/>
            <person name="Nishikawa S."/>
            <person name="Nori F."/>
            <person name="Ohara O."/>
            <person name="Okazaki Y."/>
            <person name="Orlando V."/>
            <person name="Pang K.C."/>
            <person name="Pavan W.J."/>
            <person name="Pavesi G."/>
            <person name="Pesole G."/>
            <person name="Petrovsky N."/>
            <person name="Piazza S."/>
            <person name="Reed J."/>
            <person name="Reid J.F."/>
            <person name="Ring B.Z."/>
            <person name="Ringwald M."/>
            <person name="Rost B."/>
            <person name="Ruan Y."/>
            <person name="Salzberg S.L."/>
            <person name="Sandelin A."/>
            <person name="Schneider C."/>
            <person name="Schoenbach C."/>
            <person name="Sekiguchi K."/>
            <person name="Semple C.A."/>
            <person name="Seno S."/>
            <person name="Sessa L."/>
            <person name="Sheng Y."/>
            <person name="Shibata Y."/>
            <person name="Shimada H."/>
            <person name="Shimada K."/>
            <person name="Silva D."/>
            <person name="Sinclair B."/>
            <person name="Sperling S."/>
            <person name="Stupka E."/>
            <person name="Sugiura K."/>
            <person name="Sultana R."/>
            <person name="Takenaka Y."/>
            <person name="Taki K."/>
            <person name="Tammoja K."/>
            <person name="Tan S.L."/>
            <person name="Tang S."/>
            <person name="Taylor M.S."/>
            <person name="Tegner J."/>
            <person name="Teichmann S.A."/>
            <person name="Ueda H.R."/>
            <person name="van Nimwegen E."/>
            <person name="Verardo R."/>
            <person name="Wei C.L."/>
            <person name="Yagi K."/>
            <person name="Yamanishi H."/>
            <person name="Zabarovsky E."/>
            <person name="Zhu S."/>
            <person name="Zimmer A."/>
            <person name="Hide W."/>
            <person name="Bult C."/>
            <person name="Grimmond S.M."/>
            <person name="Teasdale R.D."/>
            <person name="Liu E.T."/>
            <person name="Brusic V."/>
            <person name="Quackenbush J."/>
            <person name="Wahlestedt C."/>
            <person name="Mattick J.S."/>
            <person name="Hume D.A."/>
            <person name="Kai C."/>
            <person name="Sasaki D."/>
            <person name="Tomaru Y."/>
            <person name="Fukuda S."/>
            <person name="Kanamori-Katayama M."/>
            <person name="Suzuki M."/>
            <person name="Aoki J."/>
            <person name="Arakawa T."/>
            <person name="Iida J."/>
            <person name="Imamura K."/>
            <person name="Itoh M."/>
            <person name="Kato T."/>
            <person name="Kawaji H."/>
            <person name="Kawagashira N."/>
            <person name="Kawashima T."/>
            <person name="Kojima M."/>
            <person name="Kondo S."/>
            <person name="Konno H."/>
            <person name="Nakano K."/>
            <person name="Ninomiya N."/>
            <person name="Nishio T."/>
            <person name="Okada M."/>
            <person name="Plessy C."/>
            <person name="Shibata K."/>
            <person name="Shiraki T."/>
            <person name="Suzuki S."/>
            <person name="Tagami M."/>
            <person name="Waki K."/>
            <person name="Watahiki A."/>
            <person name="Okamura-Oho Y."/>
            <person name="Suzuki H."/>
            <person name="Kawai J."/>
            <person name="Hayashizaki Y."/>
        </authorList>
    </citation>
    <scope>NUCLEOTIDE SEQUENCE [LARGE SCALE MRNA] (ISOFORM 2)</scope>
    <source>
        <strain>C57BL/6J</strain>
        <tissue>Brain cortex</tissue>
    </source>
</reference>
<reference key="3">
    <citation type="journal article" date="2004" name="Genome Res.">
        <title>The status, quality, and expansion of the NIH full-length cDNA project: the Mammalian Gene Collection (MGC).</title>
        <authorList>
            <consortium name="The MGC Project Team"/>
        </authorList>
    </citation>
    <scope>NUCLEOTIDE SEQUENCE [LARGE SCALE MRNA] (ISOFORM 3)</scope>
    <source>
        <tissue>Eye</tissue>
    </source>
</reference>
<reference key="4">
    <citation type="journal article" date="2002" name="EMBO J.">
        <title>LNX functions as a RING type E3 ubiquitin ligase that targets the cell fate determinant Numb for ubiquitin-dependent degradation.</title>
        <authorList>
            <person name="Nie J."/>
            <person name="McGill M.A."/>
            <person name="Dermer M."/>
            <person name="Dho S.E."/>
            <person name="Wolting C.D."/>
            <person name="McGlade C.J."/>
        </authorList>
    </citation>
    <scope>FUNCTION</scope>
    <scope>DOMAIN NPXY MOTIF</scope>
    <scope>MUTAGENESIS OF CYS-48</scope>
</reference>
<reference key="5">
    <citation type="journal article" date="2004" name="J. Biol. Chem.">
        <title>A novel PTB-PDZ domain interaction mediates isoform-specific ubiquitylation of mammalian Numb.</title>
        <authorList>
            <person name="Nie J."/>
            <person name="Li S.S.-C."/>
            <person name="McGlade C.J."/>
        </authorList>
    </citation>
    <scope>FUNCTION</scope>
    <scope>DOMAINS PDZ</scope>
    <scope>INTERACTION WITH NUMB</scope>
</reference>
<reference key="6">
    <citation type="journal article" date="2006" name="Oncogene">
        <title>Ligand-of-Numb protein X is an endocytic scaffold for junctional adhesion molecule 4.</title>
        <authorList>
            <person name="Kansaku A."/>
            <person name="Hirabayashi S."/>
            <person name="Mori H."/>
            <person name="Fujiwara N."/>
            <person name="Kawata A."/>
            <person name="Ikeda M."/>
            <person name="Rokukawa C."/>
            <person name="Kurihara H."/>
            <person name="Hata Y."/>
        </authorList>
    </citation>
    <scope>INTERACTION WITH IGSF5</scope>
</reference>
<gene>
    <name type="primary">Lnx1</name>
    <name type="synonym">Lnx</name>
</gene>
<sequence>MNQPDLADDPDPSPEPLCIVCGQNHSPEENHFYTYTEDVDDDLICHICLQALLDPLDTPCGHTYCTLCLTNFLVEKDFCPVDRKPVVLQHCKKSSILVNKLLNKLLVTCPFTEHCTEVLQRCDLQHHFQTSCKGASHYGLTKDRKRRSQDGCPDGCASLMATTLSPEVSAAATISLMTDEPGLDNPAYVSSVEDGEPVANSSDSGRSNRTRARPFERSTMRSRSFKKINRALSALRRTKSGSVVANHVDQGRDNSENTTVPEVFPRLFHLIPDGEITSIKINRADPSESLSIRLVGGSETPLVHIIIQHIYRDGVIARDGRLLPGDIILKVNGMDISNVPHNYAVRLLRQPCQVLRLTVLREQKFRSRSNAHVPDSYGPRDDSFHVILNKSSPEEQLGIKLVRRVDEPGVFIFNVLNGGVADRHGQLEENDRVLAINGHDLRFGSPESAAHLIQASERRVHLVVSRQVRQSSPDIFQEAGWISNGQQSPGPGERNTASKPAATCHEKVVSVWKDPSESLGMTVGGGASHREWDLPIYVISVEPGGVISRDGRIKTGDILLNVNGIELTEVSRTEAVAILKSAPSSVVLKALEVKEQEAQEDCSPAALDSNHNVTPPGDWSPSWVMWLELPQYLCNCKDVILRRNTAGSLGFCIVGGYEEYSGNKPFFIKSIVEGTPAYNDGRIRCGDILLAVNGRSTSGMIHACLARMLKELKGRITLTIASWPGTFL</sequence>
<name>LNX1_MOUSE</name>